<organism>
    <name type="scientific">Thermus phage G20c</name>
    <name type="common">Thermus thermophilus phage G20c</name>
    <dbReference type="NCBI Taxonomy" id="1406341"/>
    <lineage>
        <taxon>Viruses</taxon>
        <taxon>Duplodnaviria</taxon>
        <taxon>Heunggongvirae</taxon>
        <taxon>Uroviricota</taxon>
        <taxon>Caudoviricetes</taxon>
        <taxon>Oshimavirus</taxon>
    </lineage>
</organism>
<accession>A0A1L4BKP6</accession>
<proteinExistence type="evidence at protein level"/>
<protein>
    <recommendedName>
        <fullName evidence="3">Terminase, small subunit</fullName>
    </recommendedName>
    <alternativeName>
        <fullName evidence="4">DNA-packaging protein gp79</fullName>
    </alternativeName>
    <alternativeName>
        <fullName evidence="4">Gene product 79</fullName>
        <shortName evidence="4">gp79</shortName>
    </alternativeName>
</protein>
<keyword id="KW-0002">3D-structure</keyword>
<keyword id="KW-0238">DNA-binding</keyword>
<keyword id="KW-0231">Viral genome packaging</keyword>
<keyword id="KW-1188">Viral release from host cell</keyword>
<organismHost>
    <name type="scientific">Thermus thermophilus</name>
    <dbReference type="NCBI Taxonomy" id="274"/>
</organismHost>
<evidence type="ECO:0000250" key="1">
    <source>
        <dbReference type="UniProtKB" id="P04893"/>
    </source>
</evidence>
<evidence type="ECO:0000269" key="2">
    <source>
    </source>
</evidence>
<evidence type="ECO:0000303" key="3">
    <source>
    </source>
</evidence>
<evidence type="ECO:0000305" key="4"/>
<evidence type="ECO:0000312" key="5">
    <source>
        <dbReference type="EMBL" id="API81887.1"/>
    </source>
</evidence>
<evidence type="ECO:0007829" key="6">
    <source>
        <dbReference type="PDB" id="4XVN"/>
    </source>
</evidence>
<evidence type="ECO:0007829" key="7">
    <source>
        <dbReference type="PDB" id="6EJQ"/>
    </source>
</evidence>
<dbReference type="EMBL" id="KX987127">
    <property type="protein sequence ID" value="API81887.1"/>
    <property type="molecule type" value="Genomic_DNA"/>
</dbReference>
<dbReference type="PDB" id="4XVN">
    <property type="method" value="X-ray"/>
    <property type="resolution" value="2.60 A"/>
    <property type="chains" value="A/B/C/D/E/F=1-171"/>
</dbReference>
<dbReference type="PDB" id="6EJQ">
    <property type="method" value="X-ray"/>
    <property type="resolution" value="2.30 A"/>
    <property type="chains" value="A/B/C/D/E/F/G/H/I=1-138"/>
</dbReference>
<dbReference type="PDBsum" id="4XVN"/>
<dbReference type="PDBsum" id="6EJQ"/>
<dbReference type="SMR" id="A0A1L4BKP6"/>
<dbReference type="Proteomes" id="UP000223104">
    <property type="component" value="Genome"/>
</dbReference>
<dbReference type="GO" id="GO:0003677">
    <property type="term" value="F:DNA binding"/>
    <property type="evidence" value="ECO:0007669"/>
    <property type="project" value="UniProtKB-KW"/>
</dbReference>
<dbReference type="InterPro" id="IPR055147">
    <property type="entry name" value="TerS_C"/>
</dbReference>
<dbReference type="InterPro" id="IPR049136">
    <property type="entry name" value="TerS_N"/>
</dbReference>
<dbReference type="Pfam" id="PF22412">
    <property type="entry name" value="TerS_C"/>
    <property type="match status" value="1"/>
</dbReference>
<dbReference type="Pfam" id="PF21434">
    <property type="entry name" value="TerS_N"/>
    <property type="match status" value="1"/>
</dbReference>
<comment type="function">
    <text evidence="1">The terminase small subunit binds to the packaging initiation site and regulates the ATPase activity of the terminase large subunit (By similarity). The terminase lies at a unique vertex of the procapsid and is composed of two subunits, a small terminase subunit involved in viral DNA recognition (packaging sequence), and a large terminase subunit (By similarity). Both terminase subunits heterooligomerize and are docked on the portal protein to form the packaging machine (By similarity).</text>
</comment>
<comment type="subunit">
    <text evidence="1 2">Homononamer; forms a ring-like structure through which genomic DNA is translocated into the capsid (PubMed:23908032). Heterodimer with the terminase large subunit; the active complex is probably heterooligomeric (By similarity).</text>
</comment>
<comment type="similarity">
    <text evidence="4">Belongs to the P23virus small terminase family.</text>
</comment>
<gene>
    <name evidence="5" type="ORF">G20c_79</name>
</gene>
<sequence>MSVSFRDRVLKLYLLGFDPSEIAQTLSLDVKRKVTEEEVLHVLAEARELLSALPSLEDIRAEVGQALERARIFQKDLLAIYQNMLRNYNAMMEGLTEHPDGTPVIGVRPADIAAMADRIMKIDQERITALLNSLKVLGHVGSTTAGALPSATELVSVEELVAEVVDEAPKT</sequence>
<name>TERS_BPG20</name>
<reference key="1">
    <citation type="journal article" date="2017" name="Nucleic Acids Res.">
        <title>Viral genome packaging terminase cleaves DNA using the canonical RuvC-like two-metal catalysis mechanism.</title>
        <authorList>
            <person name="Xu R.G."/>
            <person name="Jenkins H.T."/>
            <person name="Chechik M."/>
            <person name="Blagova E.V."/>
            <person name="Lopatina A."/>
            <person name="Klimuk E."/>
            <person name="Minakhin L."/>
            <person name="Severinov K."/>
            <person name="Greive S.J."/>
            <person name="Antson A.A."/>
        </authorList>
    </citation>
    <scope>NUCLEOTIDE SEQUENCE [LARGE SCALE GENOMIC DNA]</scope>
    <scope>X-RAY CRYSTALLOGRAPHY (2.30 ANGSTROMS) OF 1-138</scope>
</reference>
<reference key="2">
    <citation type="journal article" date="2013" name="Acta Crystallogr. F">
        <title>The putative small terminase from the thermophilic dsDNA bacteriophage G20C is a nine-subunit oligomer.</title>
        <authorList>
            <person name="Loredo-Varela J."/>
            <person name="Chechik M."/>
            <person name="Levdikov V.M."/>
            <person name="Abd-El-Aziz A."/>
            <person name="Minakhin L."/>
            <person name="Severinov K."/>
            <person name="Smits C."/>
            <person name="Antson A.A."/>
        </authorList>
    </citation>
    <scope>X-RAY CRYSTALLOGRAPHY (2.80 ANGSTROMS)</scope>
    <scope>SUBUNIT</scope>
</reference>
<feature type="chain" id="PRO_0000447197" description="Terminase, small subunit">
    <location>
        <begin position="1"/>
        <end position="171"/>
    </location>
</feature>
<feature type="helix" evidence="7">
    <location>
        <begin position="3"/>
        <end position="14"/>
    </location>
</feature>
<feature type="helix" evidence="7">
    <location>
        <begin position="19"/>
        <end position="27"/>
    </location>
</feature>
<feature type="strand" evidence="7">
    <location>
        <begin position="30"/>
        <end position="32"/>
    </location>
</feature>
<feature type="helix" evidence="7">
    <location>
        <begin position="36"/>
        <end position="50"/>
    </location>
</feature>
<feature type="helix" evidence="7">
    <location>
        <begin position="56"/>
        <end position="92"/>
    </location>
</feature>
<feature type="strand" evidence="6">
    <location>
        <begin position="99"/>
        <end position="101"/>
    </location>
</feature>
<feature type="helix" evidence="7">
    <location>
        <begin position="109"/>
        <end position="135"/>
    </location>
</feature>
<feature type="strand" evidence="6">
    <location>
        <begin position="137"/>
        <end position="139"/>
    </location>
</feature>